<gene>
    <name type="ordered locus">BCAH187_A4519</name>
</gene>
<comment type="function">
    <text evidence="1">Could be a nuclease involved in processing of the 5'-end of pre-16S rRNA.</text>
</comment>
<comment type="subcellular location">
    <subcellularLocation>
        <location evidence="1">Cytoplasm</location>
    </subcellularLocation>
</comment>
<comment type="similarity">
    <text evidence="1">Belongs to the YqgF nuclease family.</text>
</comment>
<evidence type="ECO:0000255" key="1">
    <source>
        <dbReference type="HAMAP-Rule" id="MF_00651"/>
    </source>
</evidence>
<feature type="chain" id="PRO_1000130998" description="Putative pre-16S rRNA nuclease">
    <location>
        <begin position="1"/>
        <end position="137"/>
    </location>
</feature>
<protein>
    <recommendedName>
        <fullName evidence="1">Putative pre-16S rRNA nuclease</fullName>
        <ecNumber evidence="1">3.1.-.-</ecNumber>
    </recommendedName>
</protein>
<organism>
    <name type="scientific">Bacillus cereus (strain AH187)</name>
    <dbReference type="NCBI Taxonomy" id="405534"/>
    <lineage>
        <taxon>Bacteria</taxon>
        <taxon>Bacillati</taxon>
        <taxon>Bacillota</taxon>
        <taxon>Bacilli</taxon>
        <taxon>Bacillales</taxon>
        <taxon>Bacillaceae</taxon>
        <taxon>Bacillus</taxon>
        <taxon>Bacillus cereus group</taxon>
    </lineage>
</organism>
<keyword id="KW-0963">Cytoplasm</keyword>
<keyword id="KW-0378">Hydrolase</keyword>
<keyword id="KW-0540">Nuclease</keyword>
<keyword id="KW-0690">Ribosome biogenesis</keyword>
<sequence length="137" mass="15365">MRILGLDVGTKTVGVAISDEMGWTAQGLETIKINEERGQFGFDRISELVKQYDVDKIVVGLPKNMNGTIGPRGEACQQFAENLRELLQLDVVMWDERLSTMAAERLLISADVSRKKRKQVIDKMAAVVILQGFLDRK</sequence>
<proteinExistence type="inferred from homology"/>
<reference key="1">
    <citation type="submission" date="2008-10" db="EMBL/GenBank/DDBJ databases">
        <title>Genome sequence of Bacillus cereus AH187.</title>
        <authorList>
            <person name="Dodson R.J."/>
            <person name="Durkin A.S."/>
            <person name="Rosovitz M.J."/>
            <person name="Rasko D.A."/>
            <person name="Kolsto A.B."/>
            <person name="Okstad O.A."/>
            <person name="Ravel J."/>
            <person name="Sutton G."/>
        </authorList>
    </citation>
    <scope>NUCLEOTIDE SEQUENCE [LARGE SCALE GENOMIC DNA]</scope>
    <source>
        <strain>AH187</strain>
    </source>
</reference>
<accession>B7HQE4</accession>
<name>YQGF_BACC7</name>
<dbReference type="EC" id="3.1.-.-" evidence="1"/>
<dbReference type="EMBL" id="CP001177">
    <property type="protein sequence ID" value="ACJ77757.1"/>
    <property type="molecule type" value="Genomic_DNA"/>
</dbReference>
<dbReference type="SMR" id="B7HQE4"/>
<dbReference type="KEGG" id="bcr:BCAH187_A4519"/>
<dbReference type="HOGENOM" id="CLU_098240_2_0_9"/>
<dbReference type="Proteomes" id="UP000002214">
    <property type="component" value="Chromosome"/>
</dbReference>
<dbReference type="GO" id="GO:0005829">
    <property type="term" value="C:cytosol"/>
    <property type="evidence" value="ECO:0007669"/>
    <property type="project" value="TreeGrafter"/>
</dbReference>
<dbReference type="GO" id="GO:0004518">
    <property type="term" value="F:nuclease activity"/>
    <property type="evidence" value="ECO:0007669"/>
    <property type="project" value="UniProtKB-KW"/>
</dbReference>
<dbReference type="GO" id="GO:0000967">
    <property type="term" value="P:rRNA 5'-end processing"/>
    <property type="evidence" value="ECO:0007669"/>
    <property type="project" value="UniProtKB-UniRule"/>
</dbReference>
<dbReference type="CDD" id="cd16964">
    <property type="entry name" value="YqgF"/>
    <property type="match status" value="1"/>
</dbReference>
<dbReference type="FunFam" id="3.30.420.140:FF:000003">
    <property type="entry name" value="Putative pre-16S rRNA nuclease"/>
    <property type="match status" value="1"/>
</dbReference>
<dbReference type="Gene3D" id="3.30.420.140">
    <property type="entry name" value="YqgF/RNase H-like domain"/>
    <property type="match status" value="1"/>
</dbReference>
<dbReference type="HAMAP" id="MF_00651">
    <property type="entry name" value="Nuclease_YqgF"/>
    <property type="match status" value="1"/>
</dbReference>
<dbReference type="InterPro" id="IPR012337">
    <property type="entry name" value="RNaseH-like_sf"/>
</dbReference>
<dbReference type="InterPro" id="IPR005227">
    <property type="entry name" value="YqgF"/>
</dbReference>
<dbReference type="InterPro" id="IPR006641">
    <property type="entry name" value="YqgF/RNaseH-like_dom"/>
</dbReference>
<dbReference type="InterPro" id="IPR037027">
    <property type="entry name" value="YqgF/RNaseH-like_dom_sf"/>
</dbReference>
<dbReference type="NCBIfam" id="TIGR00250">
    <property type="entry name" value="RNAse_H_YqgF"/>
    <property type="match status" value="1"/>
</dbReference>
<dbReference type="PANTHER" id="PTHR33317">
    <property type="entry name" value="POLYNUCLEOTIDYL TRANSFERASE, RIBONUCLEASE H-LIKE SUPERFAMILY PROTEIN"/>
    <property type="match status" value="1"/>
</dbReference>
<dbReference type="PANTHER" id="PTHR33317:SF4">
    <property type="entry name" value="POLYNUCLEOTIDYL TRANSFERASE, RIBONUCLEASE H-LIKE SUPERFAMILY PROTEIN"/>
    <property type="match status" value="1"/>
</dbReference>
<dbReference type="Pfam" id="PF03652">
    <property type="entry name" value="RuvX"/>
    <property type="match status" value="1"/>
</dbReference>
<dbReference type="SMART" id="SM00732">
    <property type="entry name" value="YqgFc"/>
    <property type="match status" value="1"/>
</dbReference>
<dbReference type="SUPFAM" id="SSF53098">
    <property type="entry name" value="Ribonuclease H-like"/>
    <property type="match status" value="1"/>
</dbReference>